<reference key="1">
    <citation type="journal article" date="2001" name="Nature">
        <title>Genome sequence of enterohaemorrhagic Escherichia coli O157:H7.</title>
        <authorList>
            <person name="Perna N.T."/>
            <person name="Plunkett G. III"/>
            <person name="Burland V."/>
            <person name="Mau B."/>
            <person name="Glasner J.D."/>
            <person name="Rose D.J."/>
            <person name="Mayhew G.F."/>
            <person name="Evans P.S."/>
            <person name="Gregor J."/>
            <person name="Kirkpatrick H.A."/>
            <person name="Posfai G."/>
            <person name="Hackett J."/>
            <person name="Klink S."/>
            <person name="Boutin A."/>
            <person name="Shao Y."/>
            <person name="Miller L."/>
            <person name="Grotbeck E.J."/>
            <person name="Davis N.W."/>
            <person name="Lim A."/>
            <person name="Dimalanta E.T."/>
            <person name="Potamousis K."/>
            <person name="Apodaca J."/>
            <person name="Anantharaman T.S."/>
            <person name="Lin J."/>
            <person name="Yen G."/>
            <person name="Schwartz D.C."/>
            <person name="Welch R.A."/>
            <person name="Blattner F.R."/>
        </authorList>
    </citation>
    <scope>NUCLEOTIDE SEQUENCE [LARGE SCALE GENOMIC DNA]</scope>
    <source>
        <strain>O157:H7 / EDL933 / ATCC 700927 / EHEC</strain>
    </source>
</reference>
<reference key="2">
    <citation type="journal article" date="2001" name="DNA Res.">
        <title>Complete genome sequence of enterohemorrhagic Escherichia coli O157:H7 and genomic comparison with a laboratory strain K-12.</title>
        <authorList>
            <person name="Hayashi T."/>
            <person name="Makino K."/>
            <person name="Ohnishi M."/>
            <person name="Kurokawa K."/>
            <person name="Ishii K."/>
            <person name="Yokoyama K."/>
            <person name="Han C.-G."/>
            <person name="Ohtsubo E."/>
            <person name="Nakayama K."/>
            <person name="Murata T."/>
            <person name="Tanaka M."/>
            <person name="Tobe T."/>
            <person name="Iida T."/>
            <person name="Takami H."/>
            <person name="Honda T."/>
            <person name="Sasakawa C."/>
            <person name="Ogasawara N."/>
            <person name="Yasunaga T."/>
            <person name="Kuhara S."/>
            <person name="Shiba T."/>
            <person name="Hattori M."/>
            <person name="Shinagawa H."/>
        </authorList>
    </citation>
    <scope>NUCLEOTIDE SEQUENCE [LARGE SCALE GENOMIC DNA]</scope>
    <source>
        <strain>O157:H7 / Sakai / RIMD 0509952 / EHEC</strain>
    </source>
</reference>
<organism>
    <name type="scientific">Escherichia coli O157:H7</name>
    <dbReference type="NCBI Taxonomy" id="83334"/>
    <lineage>
        <taxon>Bacteria</taxon>
        <taxon>Pseudomonadati</taxon>
        <taxon>Pseudomonadota</taxon>
        <taxon>Gammaproteobacteria</taxon>
        <taxon>Enterobacterales</taxon>
        <taxon>Enterobacteriaceae</taxon>
        <taxon>Escherichia</taxon>
    </lineage>
</organism>
<evidence type="ECO:0000255" key="1">
    <source>
        <dbReference type="HAMAP-Rule" id="MF_01565"/>
    </source>
</evidence>
<dbReference type="EMBL" id="AE005174">
    <property type="protein sequence ID" value="AAG56455.1"/>
    <property type="molecule type" value="Genomic_DNA"/>
</dbReference>
<dbReference type="EMBL" id="BA000007">
    <property type="protein sequence ID" value="BAB35349.1"/>
    <property type="molecule type" value="Genomic_DNA"/>
</dbReference>
<dbReference type="PIR" id="C85749">
    <property type="entry name" value="C85749"/>
</dbReference>
<dbReference type="PIR" id="F90869">
    <property type="entry name" value="F90869"/>
</dbReference>
<dbReference type="RefSeq" id="WP_000387388.1">
    <property type="nucleotide sequence ID" value="NZ_VOAI01000039.1"/>
</dbReference>
<dbReference type="SMR" id="P64425"/>
<dbReference type="STRING" id="155864.Z2419"/>
<dbReference type="GeneID" id="93775479"/>
<dbReference type="KEGG" id="ece:Z2419"/>
<dbReference type="KEGG" id="ecs:ECs_1926"/>
<dbReference type="PATRIC" id="fig|386585.9.peg.2033"/>
<dbReference type="eggNOG" id="COG0598">
    <property type="taxonomic scope" value="Bacteria"/>
</dbReference>
<dbReference type="HOGENOM" id="CLU_007127_2_0_6"/>
<dbReference type="OMA" id="MVSVRIF"/>
<dbReference type="Proteomes" id="UP000000558">
    <property type="component" value="Chromosome"/>
</dbReference>
<dbReference type="Proteomes" id="UP000002519">
    <property type="component" value="Chromosome"/>
</dbReference>
<dbReference type="GO" id="GO:0005886">
    <property type="term" value="C:plasma membrane"/>
    <property type="evidence" value="ECO:0007669"/>
    <property type="project" value="UniProtKB-SubCell"/>
</dbReference>
<dbReference type="GO" id="GO:0050897">
    <property type="term" value="F:cobalt ion binding"/>
    <property type="evidence" value="ECO:0007669"/>
    <property type="project" value="TreeGrafter"/>
</dbReference>
<dbReference type="GO" id="GO:0015087">
    <property type="term" value="F:cobalt ion transmembrane transporter activity"/>
    <property type="evidence" value="ECO:0007669"/>
    <property type="project" value="TreeGrafter"/>
</dbReference>
<dbReference type="GO" id="GO:0000287">
    <property type="term" value="F:magnesium ion binding"/>
    <property type="evidence" value="ECO:0007669"/>
    <property type="project" value="TreeGrafter"/>
</dbReference>
<dbReference type="GO" id="GO:0015095">
    <property type="term" value="F:magnesium ion transmembrane transporter activity"/>
    <property type="evidence" value="ECO:0007669"/>
    <property type="project" value="TreeGrafter"/>
</dbReference>
<dbReference type="GO" id="GO:0005385">
    <property type="term" value="F:zinc ion transmembrane transporter activity"/>
    <property type="evidence" value="ECO:0007669"/>
    <property type="project" value="UniProtKB-UniRule"/>
</dbReference>
<dbReference type="CDD" id="cd12833">
    <property type="entry name" value="ZntB-like_1"/>
    <property type="match status" value="1"/>
</dbReference>
<dbReference type="FunFam" id="1.20.58.340:FF:000002">
    <property type="entry name" value="Zinc transport protein ZntB"/>
    <property type="match status" value="1"/>
</dbReference>
<dbReference type="FunFam" id="1.20.58.340:FF:000003">
    <property type="entry name" value="Zinc transport protein ZntB"/>
    <property type="match status" value="1"/>
</dbReference>
<dbReference type="FunFam" id="3.30.460.20:FF:000001">
    <property type="entry name" value="Zinc transport protein ZntB"/>
    <property type="match status" value="1"/>
</dbReference>
<dbReference type="Gene3D" id="3.30.460.20">
    <property type="entry name" value="CorA soluble domain-like"/>
    <property type="match status" value="1"/>
</dbReference>
<dbReference type="Gene3D" id="1.20.58.340">
    <property type="entry name" value="Magnesium transport protein CorA, transmembrane region"/>
    <property type="match status" value="2"/>
</dbReference>
<dbReference type="HAMAP" id="MF_01565">
    <property type="entry name" value="ZntB"/>
    <property type="match status" value="1"/>
</dbReference>
<dbReference type="InterPro" id="IPR045861">
    <property type="entry name" value="CorA_cytoplasmic_dom"/>
</dbReference>
<dbReference type="InterPro" id="IPR045863">
    <property type="entry name" value="CorA_TM1_TM2"/>
</dbReference>
<dbReference type="InterPro" id="IPR002523">
    <property type="entry name" value="MgTranspt_CorA/ZnTranspt_ZntB"/>
</dbReference>
<dbReference type="InterPro" id="IPR023714">
    <property type="entry name" value="Zn_transp_ZntB"/>
</dbReference>
<dbReference type="NCBIfam" id="NF007092">
    <property type="entry name" value="PRK09546.1"/>
    <property type="match status" value="1"/>
</dbReference>
<dbReference type="PANTHER" id="PTHR46494">
    <property type="entry name" value="CORA FAMILY METAL ION TRANSPORTER (EUROFUNG)"/>
    <property type="match status" value="1"/>
</dbReference>
<dbReference type="PANTHER" id="PTHR46494:SF3">
    <property type="entry name" value="ZINC TRANSPORT PROTEIN ZNTB"/>
    <property type="match status" value="1"/>
</dbReference>
<dbReference type="Pfam" id="PF01544">
    <property type="entry name" value="CorA"/>
    <property type="match status" value="1"/>
</dbReference>
<dbReference type="SUPFAM" id="SSF143865">
    <property type="entry name" value="CorA soluble domain-like"/>
    <property type="match status" value="1"/>
</dbReference>
<dbReference type="SUPFAM" id="SSF144083">
    <property type="entry name" value="Magnesium transport protein CorA, transmembrane region"/>
    <property type="match status" value="1"/>
</dbReference>
<comment type="function">
    <text evidence="1">Zinc transporter. Acts as a Zn(2+):proton symporter, which likely mediates zinc ion uptake.</text>
</comment>
<comment type="catalytic activity">
    <reaction evidence="1">
        <text>Zn(2+)(out) + H(+)(out) = Zn(2+)(in) + H(+)(in)</text>
        <dbReference type="Rhea" id="RHEA:71195"/>
        <dbReference type="ChEBI" id="CHEBI:15378"/>
        <dbReference type="ChEBI" id="CHEBI:29105"/>
    </reaction>
    <physiologicalReaction direction="left-to-right" evidence="1">
        <dbReference type="Rhea" id="RHEA:71196"/>
    </physiologicalReaction>
</comment>
<comment type="subcellular location">
    <subcellularLocation>
        <location evidence="1">Cell inner membrane</location>
        <topology evidence="1">Multi-pass membrane protein</topology>
    </subcellularLocation>
</comment>
<comment type="similarity">
    <text evidence="1">Belongs to the CorA metal ion transporter (MIT) (TC 1.A.35) family.</text>
</comment>
<protein>
    <recommendedName>
        <fullName evidence="1">Zinc transport protein ZntB</fullName>
    </recommendedName>
</protein>
<name>ZNTB_ECO57</name>
<keyword id="KW-0997">Cell inner membrane</keyword>
<keyword id="KW-1003">Cell membrane</keyword>
<keyword id="KW-0406">Ion transport</keyword>
<keyword id="KW-0472">Membrane</keyword>
<keyword id="KW-1185">Reference proteome</keyword>
<keyword id="KW-0812">Transmembrane</keyword>
<keyword id="KW-1133">Transmembrane helix</keyword>
<keyword id="KW-0813">Transport</keyword>
<keyword id="KW-0862">Zinc</keyword>
<feature type="chain" id="PRO_0000201317" description="Zinc transport protein ZntB">
    <location>
        <begin position="1"/>
        <end position="327"/>
    </location>
</feature>
<feature type="topological domain" description="Cytoplasmic" evidence="1">
    <location>
        <begin position="1"/>
        <end position="273"/>
    </location>
</feature>
<feature type="transmembrane region" description="Helical" evidence="1">
    <location>
        <begin position="274"/>
        <end position="294"/>
    </location>
</feature>
<feature type="topological domain" description="Periplasmic" evidence="1">
    <location>
        <begin position="295"/>
        <end position="300"/>
    </location>
</feature>
<feature type="transmembrane region" description="Helical" evidence="1">
    <location>
        <begin position="301"/>
        <end position="321"/>
    </location>
</feature>
<feature type="topological domain" description="Cytoplasmic" evidence="1">
    <location>
        <begin position="322"/>
        <end position="327"/>
    </location>
</feature>
<accession>P64425</accession>
<accession>P76054</accession>
<proteinExistence type="inferred from homology"/>
<gene>
    <name evidence="1" type="primary">zntB</name>
    <name type="ordered locus">Z2419</name>
    <name type="ordered locus">ECs1926</name>
</gene>
<sequence>MEAIKGSDVNVPDAVFAWMLDGRGGVKPLENTDVIDEAHPCWLHLNYVHHDSAQWLATTPLLPNNVRDALAGESTRPRVSRLGEGTLITLRCINGSTDERPDQLVAMRVYMDGRLIVSTRQRKVLALDDVVSDLEEGTGPTDCGGWLVDVCDALTDHSSEFIEQLHDKIIDLEDNLLDQQIPPRGFLALLRKQLIVMRRYMAPQRDVYARLASERLPWMSDDQRRRMQDIADRLGRGLDEIDACIARTGVMADEIAQVMQENLARRTYTMSLMAMVFLPSTFLTGLFGVNLGGIPGGGWQFGFSIFCILLVVLIGGVALWLHRSKWL</sequence>